<organism>
    <name type="scientific">Schizosaccharomyces pombe (strain 972 / ATCC 24843)</name>
    <name type="common">Fission yeast</name>
    <dbReference type="NCBI Taxonomy" id="284812"/>
    <lineage>
        <taxon>Eukaryota</taxon>
        <taxon>Fungi</taxon>
        <taxon>Dikarya</taxon>
        <taxon>Ascomycota</taxon>
        <taxon>Taphrinomycotina</taxon>
        <taxon>Schizosaccharomycetes</taxon>
        <taxon>Schizosaccharomycetales</taxon>
        <taxon>Schizosaccharomycetaceae</taxon>
        <taxon>Schizosaccharomyces</taxon>
    </lineage>
</organism>
<feature type="chain" id="PRO_0000085879" description="Serine/threonine-protein kinase crk1">
    <location>
        <begin position="1"/>
        <end position="335"/>
    </location>
</feature>
<feature type="domain" description="Protein kinase" evidence="1">
    <location>
        <begin position="11"/>
        <end position="292"/>
    </location>
</feature>
<feature type="active site" description="Proton acceptor" evidence="1 2">
    <location>
        <position position="133"/>
    </location>
</feature>
<feature type="binding site" evidence="1">
    <location>
        <begin position="17"/>
        <end position="25"/>
    </location>
    <ligand>
        <name>ATP</name>
        <dbReference type="ChEBI" id="CHEBI:30616"/>
    </ligand>
</feature>
<feature type="binding site" evidence="1">
    <location>
        <position position="40"/>
    </location>
    <ligand>
        <name>ATP</name>
        <dbReference type="ChEBI" id="CHEBI:30616"/>
    </ligand>
</feature>
<feature type="modified residue" description="Phosphoserine" evidence="6">
    <location>
        <position position="162"/>
    </location>
</feature>
<feature type="modified residue" description="Phosphoserine; by CAK" evidence="6 9">
    <location>
        <position position="165"/>
    </location>
</feature>
<feature type="modified residue" description="Phosphoserine" evidence="6">
    <location>
        <position position="318"/>
    </location>
</feature>
<reference key="1">
    <citation type="journal article" date="1995" name="EMBO J.">
        <title>Schizosaccharomyces pombe Mop1-Mcs2 is related to mammalian CAK.</title>
        <authorList>
            <person name="Damagnez V."/>
            <person name="Makela T.P."/>
            <person name="Cottarel G."/>
        </authorList>
    </citation>
    <scope>NUCLEOTIDE SEQUENCE [MRNA]</scope>
    <scope>FUNCTION</scope>
    <scope>CATALYTIC ACTIVITY</scope>
    <scope>INTERACTION WITH MCS2</scope>
</reference>
<reference key="2">
    <citation type="journal article" date="1995" name="EMBO J.">
        <title>Identification of a cdk-activating kinase in fission yeast.</title>
        <authorList>
            <person name="Buck V."/>
            <person name="Russell P."/>
            <person name="Millar J.B.A."/>
        </authorList>
    </citation>
    <scope>NUCLEOTIDE SEQUENCE [GENOMIC DNA]</scope>
    <scope>FUNCTION</scope>
    <scope>CATALYTIC ACTIVITY</scope>
    <scope>INTERACTION WITH MCS2</scope>
    <source>
        <strain>972 / ATCC 24843</strain>
    </source>
</reference>
<reference key="3">
    <citation type="journal article" date="2002" name="Nature">
        <title>The genome sequence of Schizosaccharomyces pombe.</title>
        <authorList>
            <person name="Wood V."/>
            <person name="Gwilliam R."/>
            <person name="Rajandream M.A."/>
            <person name="Lyne M.H."/>
            <person name="Lyne R."/>
            <person name="Stewart A."/>
            <person name="Sgouros J.G."/>
            <person name="Peat N."/>
            <person name="Hayles J."/>
            <person name="Baker S.G."/>
            <person name="Basham D."/>
            <person name="Bowman S."/>
            <person name="Brooks K."/>
            <person name="Brown D."/>
            <person name="Brown S."/>
            <person name="Chillingworth T."/>
            <person name="Churcher C.M."/>
            <person name="Collins M."/>
            <person name="Connor R."/>
            <person name="Cronin A."/>
            <person name="Davis P."/>
            <person name="Feltwell T."/>
            <person name="Fraser A."/>
            <person name="Gentles S."/>
            <person name="Goble A."/>
            <person name="Hamlin N."/>
            <person name="Harris D.E."/>
            <person name="Hidalgo J."/>
            <person name="Hodgson G."/>
            <person name="Holroyd S."/>
            <person name="Hornsby T."/>
            <person name="Howarth S."/>
            <person name="Huckle E.J."/>
            <person name="Hunt S."/>
            <person name="Jagels K."/>
            <person name="James K.D."/>
            <person name="Jones L."/>
            <person name="Jones M."/>
            <person name="Leather S."/>
            <person name="McDonald S."/>
            <person name="McLean J."/>
            <person name="Mooney P."/>
            <person name="Moule S."/>
            <person name="Mungall K.L."/>
            <person name="Murphy L.D."/>
            <person name="Niblett D."/>
            <person name="Odell C."/>
            <person name="Oliver K."/>
            <person name="O'Neil S."/>
            <person name="Pearson D."/>
            <person name="Quail M.A."/>
            <person name="Rabbinowitsch E."/>
            <person name="Rutherford K.M."/>
            <person name="Rutter S."/>
            <person name="Saunders D."/>
            <person name="Seeger K."/>
            <person name="Sharp S."/>
            <person name="Skelton J."/>
            <person name="Simmonds M.N."/>
            <person name="Squares R."/>
            <person name="Squares S."/>
            <person name="Stevens K."/>
            <person name="Taylor K."/>
            <person name="Taylor R.G."/>
            <person name="Tivey A."/>
            <person name="Walsh S.V."/>
            <person name="Warren T."/>
            <person name="Whitehead S."/>
            <person name="Woodward J.R."/>
            <person name="Volckaert G."/>
            <person name="Aert R."/>
            <person name="Robben J."/>
            <person name="Grymonprez B."/>
            <person name="Weltjens I."/>
            <person name="Vanstreels E."/>
            <person name="Rieger M."/>
            <person name="Schaefer M."/>
            <person name="Mueller-Auer S."/>
            <person name="Gabel C."/>
            <person name="Fuchs M."/>
            <person name="Duesterhoeft A."/>
            <person name="Fritzc C."/>
            <person name="Holzer E."/>
            <person name="Moestl D."/>
            <person name="Hilbert H."/>
            <person name="Borzym K."/>
            <person name="Langer I."/>
            <person name="Beck A."/>
            <person name="Lehrach H."/>
            <person name="Reinhardt R."/>
            <person name="Pohl T.M."/>
            <person name="Eger P."/>
            <person name="Zimmermann W."/>
            <person name="Wedler H."/>
            <person name="Wambutt R."/>
            <person name="Purnelle B."/>
            <person name="Goffeau A."/>
            <person name="Cadieu E."/>
            <person name="Dreano S."/>
            <person name="Gloux S."/>
            <person name="Lelaure V."/>
            <person name="Mottier S."/>
            <person name="Galibert F."/>
            <person name="Aves S.J."/>
            <person name="Xiang Z."/>
            <person name="Hunt C."/>
            <person name="Moore K."/>
            <person name="Hurst S.M."/>
            <person name="Lucas M."/>
            <person name="Rochet M."/>
            <person name="Gaillardin C."/>
            <person name="Tallada V.A."/>
            <person name="Garzon A."/>
            <person name="Thode G."/>
            <person name="Daga R.R."/>
            <person name="Cruzado L."/>
            <person name="Jimenez J."/>
            <person name="Sanchez M."/>
            <person name="del Rey F."/>
            <person name="Benito J."/>
            <person name="Dominguez A."/>
            <person name="Revuelta J.L."/>
            <person name="Moreno S."/>
            <person name="Armstrong J."/>
            <person name="Forsburg S.L."/>
            <person name="Cerutti L."/>
            <person name="Lowe T."/>
            <person name="McCombie W.R."/>
            <person name="Paulsen I."/>
            <person name="Potashkin J."/>
            <person name="Shpakovski G.V."/>
            <person name="Ussery D."/>
            <person name="Barrell B.G."/>
            <person name="Nurse P."/>
        </authorList>
    </citation>
    <scope>NUCLEOTIDE SEQUENCE [LARGE SCALE GENOMIC DNA]</scope>
    <source>
        <strain>972 / ATCC 24843</strain>
    </source>
</reference>
<reference key="4">
    <citation type="journal article" date="1998" name="EMBO J.">
        <title>Fission yeast Csk1 is a CAK-activating kinase (CAKAK).</title>
        <authorList>
            <person name="Hermand D."/>
            <person name="Pihlak A."/>
            <person name="Westerling T."/>
            <person name="Damagnez V."/>
            <person name="Vandenhaute J."/>
            <person name="Cottarel G."/>
            <person name="Makela T.P."/>
        </authorList>
    </citation>
    <scope>CATALYTIC ACTIVITY</scope>
    <scope>PHOSPHORYLATION AT SER-165</scope>
</reference>
<reference key="5">
    <citation type="journal article" date="2003" name="J. Biol. Chem.">
        <title>Mediator influences Schizosaccharomyces pombe RNA polymerase II-dependent transcription in vitro.</title>
        <authorList>
            <person name="Spaehr H."/>
            <person name="Khorosjutina O."/>
            <person name="Baraznenok V."/>
            <person name="Linder T."/>
            <person name="Samuelsen C.O."/>
            <person name="Hermand D."/>
            <person name="Maekelae T.P."/>
            <person name="Holmberg S."/>
            <person name="Gustafsson C.M."/>
        </authorList>
    </citation>
    <scope>SUBUNIT</scope>
</reference>
<reference key="6">
    <citation type="journal article" date="2004" name="Biochem. Biophys. Res. Commun.">
        <title>Mcs2 and a novel CAK subunit Pmh1 associate with Skp1 in fission yeast.</title>
        <authorList>
            <person name="Bamps S."/>
            <person name="Westerling T."/>
            <person name="Pihlak A."/>
            <person name="Tafforeau L."/>
            <person name="Vandenhaute J."/>
            <person name="Maekelae T.P."/>
            <person name="Hermand D."/>
        </authorList>
    </citation>
    <scope>INTERACTION WITH MCS2 AND TFB3</scope>
</reference>
<reference key="7">
    <citation type="journal article" date="2006" name="Nat. Biotechnol.">
        <title>ORFeome cloning and global analysis of protein localization in the fission yeast Schizosaccharomyces pombe.</title>
        <authorList>
            <person name="Matsuyama A."/>
            <person name="Arai R."/>
            <person name="Yashiroda Y."/>
            <person name="Shirai A."/>
            <person name="Kamata A."/>
            <person name="Sekido S."/>
            <person name="Kobayashi Y."/>
            <person name="Hashimoto A."/>
            <person name="Hamamoto M."/>
            <person name="Hiraoka Y."/>
            <person name="Horinouchi S."/>
            <person name="Yoshida M."/>
        </authorList>
    </citation>
    <scope>SUBCELLULAR LOCATION [LARGE SCALE ANALYSIS]</scope>
</reference>
<reference key="8">
    <citation type="journal article" date="2008" name="J. Proteome Res.">
        <title>Phosphoproteome analysis of fission yeast.</title>
        <authorList>
            <person name="Wilson-Grady J.T."/>
            <person name="Villen J."/>
            <person name="Gygi S.P."/>
        </authorList>
    </citation>
    <scope>PHOSPHORYLATION [LARGE SCALE ANALYSIS] AT SER-162; SER-165 AND SER-318</scope>
    <scope>IDENTIFICATION BY MASS SPECTROMETRY</scope>
</reference>
<evidence type="ECO:0000255" key="1">
    <source>
        <dbReference type="PROSITE-ProRule" id="PRU00159"/>
    </source>
</evidence>
<evidence type="ECO:0000255" key="2">
    <source>
        <dbReference type="PROSITE-ProRule" id="PRU10027"/>
    </source>
</evidence>
<evidence type="ECO:0000269" key="3">
    <source>
    </source>
</evidence>
<evidence type="ECO:0000269" key="4">
    <source>
    </source>
</evidence>
<evidence type="ECO:0000269" key="5">
    <source>
    </source>
</evidence>
<evidence type="ECO:0000269" key="6">
    <source>
    </source>
</evidence>
<evidence type="ECO:0000269" key="7">
    <source>
    </source>
</evidence>
<evidence type="ECO:0000269" key="8">
    <source>
    </source>
</evidence>
<evidence type="ECO:0000269" key="9">
    <source>
    </source>
</evidence>
<evidence type="ECO:0000305" key="10"/>
<evidence type="ECO:0000305" key="11">
    <source>
    </source>
</evidence>
<dbReference type="EC" id="2.7.11.23" evidence="7 8 9"/>
<dbReference type="EMBL" id="L47353">
    <property type="protein sequence ID" value="AAB00356.1"/>
    <property type="molecule type" value="mRNA"/>
</dbReference>
<dbReference type="EMBL" id="X91239">
    <property type="protein sequence ID" value="CAA62621.1"/>
    <property type="molecule type" value="Genomic_DNA"/>
</dbReference>
<dbReference type="EMBL" id="CU329671">
    <property type="protein sequence ID" value="CAA19127.1"/>
    <property type="molecule type" value="Genomic_DNA"/>
</dbReference>
<dbReference type="PIR" id="S66145">
    <property type="entry name" value="S66145"/>
</dbReference>
<dbReference type="RefSeq" id="NP_596349.1">
    <property type="nucleotide sequence ID" value="NM_001022269.2"/>
</dbReference>
<dbReference type="SMR" id="Q12126"/>
<dbReference type="BioGRID" id="276999">
    <property type="interactions" value="14"/>
</dbReference>
<dbReference type="FunCoup" id="Q12126">
    <property type="interactions" value="935"/>
</dbReference>
<dbReference type="IntAct" id="Q12126">
    <property type="interactions" value="2"/>
</dbReference>
<dbReference type="STRING" id="284812.Q12126"/>
<dbReference type="iPTMnet" id="Q12126"/>
<dbReference type="PaxDb" id="4896-SPBC19F8.07.1"/>
<dbReference type="EnsemblFungi" id="SPBC19F8.07.1">
    <property type="protein sequence ID" value="SPBC19F8.07.1:pep"/>
    <property type="gene ID" value="SPBC19F8.07"/>
</dbReference>
<dbReference type="GeneID" id="2540471"/>
<dbReference type="KEGG" id="spo:2540471"/>
<dbReference type="PomBase" id="SPBC19F8.07"/>
<dbReference type="VEuPathDB" id="FungiDB:SPBC19F8.07"/>
<dbReference type="eggNOG" id="KOG0659">
    <property type="taxonomic scope" value="Eukaryota"/>
</dbReference>
<dbReference type="HOGENOM" id="CLU_000288_181_1_1"/>
<dbReference type="InParanoid" id="Q12126"/>
<dbReference type="OMA" id="GIHHCHR"/>
<dbReference type="PhylomeDB" id="Q12126"/>
<dbReference type="BRENDA" id="2.7.11.23">
    <property type="organism ID" value="5613"/>
</dbReference>
<dbReference type="Reactome" id="R-SPO-113418">
    <property type="pathway name" value="Formation of the Early Elongation Complex"/>
</dbReference>
<dbReference type="Reactome" id="R-SPO-5696395">
    <property type="pathway name" value="Formation of Incision Complex in GG-NER"/>
</dbReference>
<dbReference type="Reactome" id="R-SPO-674695">
    <property type="pathway name" value="RNA Polymerase II Pre-transcription Events"/>
</dbReference>
<dbReference type="Reactome" id="R-SPO-6781823">
    <property type="pathway name" value="Formation of TC-NER Pre-Incision Complex"/>
</dbReference>
<dbReference type="Reactome" id="R-SPO-6782135">
    <property type="pathway name" value="Dual incision in TC-NER"/>
</dbReference>
<dbReference type="Reactome" id="R-SPO-6782210">
    <property type="pathway name" value="Gap-filling DNA repair synthesis and ligation in TC-NER"/>
</dbReference>
<dbReference type="Reactome" id="R-SPO-6796648">
    <property type="pathway name" value="TP53 Regulates Transcription of DNA Repair Genes"/>
</dbReference>
<dbReference type="Reactome" id="R-SPO-6807505">
    <property type="pathway name" value="RNA polymerase II transcribes snRNA genes"/>
</dbReference>
<dbReference type="Reactome" id="R-SPO-69231">
    <property type="pathway name" value="Cyclin D associated events in G1"/>
</dbReference>
<dbReference type="Reactome" id="R-SPO-69656">
    <property type="pathway name" value="Cyclin A:Cdk2-associated events at S phase entry"/>
</dbReference>
<dbReference type="Reactome" id="R-SPO-72086">
    <property type="pathway name" value="mRNA Capping"/>
</dbReference>
<dbReference type="Reactome" id="R-SPO-73772">
    <property type="pathway name" value="RNA Polymerase I Promoter Escape"/>
</dbReference>
<dbReference type="Reactome" id="R-SPO-73776">
    <property type="pathway name" value="RNA Polymerase II Promoter Escape"/>
</dbReference>
<dbReference type="Reactome" id="R-SPO-73779">
    <property type="pathway name" value="RNA Polymerase II Transcription Pre-Initiation And Promoter Opening"/>
</dbReference>
<dbReference type="Reactome" id="R-SPO-75953">
    <property type="pathway name" value="RNA Polymerase II Transcription Initiation"/>
</dbReference>
<dbReference type="Reactome" id="R-SPO-76042">
    <property type="pathway name" value="RNA Polymerase II Transcription Initiation And Promoter Clearance"/>
</dbReference>
<dbReference type="Reactome" id="R-SPO-77075">
    <property type="pathway name" value="RNA Pol II CTD phosphorylation and interaction with CE"/>
</dbReference>
<dbReference type="PRO" id="PR:Q12126"/>
<dbReference type="Proteomes" id="UP000002485">
    <property type="component" value="Chromosome II"/>
</dbReference>
<dbReference type="GO" id="GO:0000785">
    <property type="term" value="C:chromatin"/>
    <property type="evidence" value="ECO:0000314"/>
    <property type="project" value="PomBase"/>
</dbReference>
<dbReference type="GO" id="GO:0005737">
    <property type="term" value="C:cytoplasm"/>
    <property type="evidence" value="ECO:0007005"/>
    <property type="project" value="PomBase"/>
</dbReference>
<dbReference type="GO" id="GO:0005829">
    <property type="term" value="C:cytosol"/>
    <property type="evidence" value="ECO:0007005"/>
    <property type="project" value="PomBase"/>
</dbReference>
<dbReference type="GO" id="GO:0005634">
    <property type="term" value="C:nucleus"/>
    <property type="evidence" value="ECO:0007005"/>
    <property type="project" value="PomBase"/>
</dbReference>
<dbReference type="GO" id="GO:0005675">
    <property type="term" value="C:transcription factor TFIIH holo complex"/>
    <property type="evidence" value="ECO:0000353"/>
    <property type="project" value="PomBase"/>
</dbReference>
<dbReference type="GO" id="GO:0070985">
    <property type="term" value="C:transcription factor TFIIK complex"/>
    <property type="evidence" value="ECO:0000314"/>
    <property type="project" value="PomBase"/>
</dbReference>
<dbReference type="GO" id="GO:0005524">
    <property type="term" value="F:ATP binding"/>
    <property type="evidence" value="ECO:0007669"/>
    <property type="project" value="UniProtKB-KW"/>
</dbReference>
<dbReference type="GO" id="GO:0097472">
    <property type="term" value="F:cyclin-dependent protein kinase activity"/>
    <property type="evidence" value="ECO:0000314"/>
    <property type="project" value="PomBase"/>
</dbReference>
<dbReference type="GO" id="GO:0004693">
    <property type="term" value="F:cyclin-dependent protein serine/threonine kinase activity"/>
    <property type="evidence" value="ECO:0000314"/>
    <property type="project" value="PomBase"/>
</dbReference>
<dbReference type="GO" id="GO:0004674">
    <property type="term" value="F:protein serine/threonine kinase activity"/>
    <property type="evidence" value="ECO:0000314"/>
    <property type="project" value="PomBase"/>
</dbReference>
<dbReference type="GO" id="GO:0008353">
    <property type="term" value="F:RNA polymerase II CTD heptapeptide repeat kinase activity"/>
    <property type="evidence" value="ECO:0000314"/>
    <property type="project" value="PomBase"/>
</dbReference>
<dbReference type="GO" id="GO:0140834">
    <property type="term" value="F:RNA polymerase II CTD heptapeptide repeat S2 kinase activity"/>
    <property type="evidence" value="ECO:0000315"/>
    <property type="project" value="PomBase"/>
</dbReference>
<dbReference type="GO" id="GO:0140836">
    <property type="term" value="F:RNA polymerase II CTD heptapeptide repeat S5 kinase activity"/>
    <property type="evidence" value="ECO:0000314"/>
    <property type="project" value="PomBase"/>
</dbReference>
<dbReference type="GO" id="GO:0016251">
    <property type="term" value="F:RNA polymerase II general transcription initiation factor activity"/>
    <property type="evidence" value="ECO:0000314"/>
    <property type="project" value="PomBase"/>
</dbReference>
<dbReference type="GO" id="GO:0051301">
    <property type="term" value="P:cell division"/>
    <property type="evidence" value="ECO:0007669"/>
    <property type="project" value="UniProtKB-KW"/>
</dbReference>
<dbReference type="GO" id="GO:0045944">
    <property type="term" value="P:positive regulation of transcription by RNA polymerase II"/>
    <property type="evidence" value="ECO:0000318"/>
    <property type="project" value="GO_Central"/>
</dbReference>
<dbReference type="GO" id="GO:0032968">
    <property type="term" value="P:positive regulation of transcription elongation by RNA polymerase II"/>
    <property type="evidence" value="ECO:0000269"/>
    <property type="project" value="PomBase"/>
</dbReference>
<dbReference type="GO" id="GO:0060261">
    <property type="term" value="P:positive regulation of transcription initiation by RNA polymerase II"/>
    <property type="evidence" value="ECO:0000315"/>
    <property type="project" value="PomBase"/>
</dbReference>
<dbReference type="GO" id="GO:0051726">
    <property type="term" value="P:regulation of cell cycle"/>
    <property type="evidence" value="ECO:0000318"/>
    <property type="project" value="GO_Central"/>
</dbReference>
<dbReference type="GO" id="GO:0006367">
    <property type="term" value="P:transcription initiation at RNA polymerase II promoter"/>
    <property type="evidence" value="ECO:0000314"/>
    <property type="project" value="PomBase"/>
</dbReference>
<dbReference type="CDD" id="cd07841">
    <property type="entry name" value="STKc_CDK7"/>
    <property type="match status" value="1"/>
</dbReference>
<dbReference type="FunFam" id="3.30.200.20:FF:000554">
    <property type="entry name" value="CMGC/CDK/CDK7 protein kinase"/>
    <property type="match status" value="1"/>
</dbReference>
<dbReference type="FunFam" id="1.10.510.10:FF:000097">
    <property type="entry name" value="Putative cyclin-dependent kinase 7"/>
    <property type="match status" value="1"/>
</dbReference>
<dbReference type="Gene3D" id="3.30.200.20">
    <property type="entry name" value="Phosphorylase Kinase, domain 1"/>
    <property type="match status" value="1"/>
</dbReference>
<dbReference type="Gene3D" id="1.10.510.10">
    <property type="entry name" value="Transferase(Phosphotransferase) domain 1"/>
    <property type="match status" value="1"/>
</dbReference>
<dbReference type="InterPro" id="IPR050108">
    <property type="entry name" value="CDK"/>
</dbReference>
<dbReference type="InterPro" id="IPR037770">
    <property type="entry name" value="CDK7"/>
</dbReference>
<dbReference type="InterPro" id="IPR011009">
    <property type="entry name" value="Kinase-like_dom_sf"/>
</dbReference>
<dbReference type="InterPro" id="IPR000719">
    <property type="entry name" value="Prot_kinase_dom"/>
</dbReference>
<dbReference type="InterPro" id="IPR017441">
    <property type="entry name" value="Protein_kinase_ATP_BS"/>
</dbReference>
<dbReference type="InterPro" id="IPR008271">
    <property type="entry name" value="Ser/Thr_kinase_AS"/>
</dbReference>
<dbReference type="PANTHER" id="PTHR24056">
    <property type="entry name" value="CELL DIVISION PROTEIN KINASE"/>
    <property type="match status" value="1"/>
</dbReference>
<dbReference type="PANTHER" id="PTHR24056:SF0">
    <property type="entry name" value="CYCLIN-DEPENDENT KINASE 7"/>
    <property type="match status" value="1"/>
</dbReference>
<dbReference type="Pfam" id="PF00069">
    <property type="entry name" value="Pkinase"/>
    <property type="match status" value="1"/>
</dbReference>
<dbReference type="SMART" id="SM00220">
    <property type="entry name" value="S_TKc"/>
    <property type="match status" value="1"/>
</dbReference>
<dbReference type="SUPFAM" id="SSF56112">
    <property type="entry name" value="Protein kinase-like (PK-like)"/>
    <property type="match status" value="1"/>
</dbReference>
<dbReference type="PROSITE" id="PS00107">
    <property type="entry name" value="PROTEIN_KINASE_ATP"/>
    <property type="match status" value="1"/>
</dbReference>
<dbReference type="PROSITE" id="PS50011">
    <property type="entry name" value="PROTEIN_KINASE_DOM"/>
    <property type="match status" value="1"/>
</dbReference>
<dbReference type="PROSITE" id="PS00108">
    <property type="entry name" value="PROTEIN_KINASE_ST"/>
    <property type="match status" value="1"/>
</dbReference>
<keyword id="KW-0067">ATP-binding</keyword>
<keyword id="KW-0131">Cell cycle</keyword>
<keyword id="KW-0132">Cell division</keyword>
<keyword id="KW-0963">Cytoplasm</keyword>
<keyword id="KW-0418">Kinase</keyword>
<keyword id="KW-0547">Nucleotide-binding</keyword>
<keyword id="KW-0539">Nucleus</keyword>
<keyword id="KW-0597">Phosphoprotein</keyword>
<keyword id="KW-1185">Reference proteome</keyword>
<keyword id="KW-0723">Serine/threonine-protein kinase</keyword>
<keyword id="KW-0804">Transcription</keyword>
<keyword id="KW-0805">Transcription regulation</keyword>
<keyword id="KW-0808">Transferase</keyword>
<name>CRK1_SCHPO</name>
<proteinExistence type="evidence at protein level"/>
<comment type="function">
    <text evidence="7 8">Protein kinase essential for cell proliferation, where it is required for completion of cytokinesis. Phosphorylates the C-terminal repeat domain (CTD) of RNA polymerase II.</text>
</comment>
<comment type="catalytic activity">
    <reaction evidence="7 8 9">
        <text>[DNA-directed RNA polymerase] + ATP = phospho-[DNA-directed RNA polymerase] + ADP + H(+)</text>
        <dbReference type="Rhea" id="RHEA:10216"/>
        <dbReference type="Rhea" id="RHEA-COMP:11321"/>
        <dbReference type="Rhea" id="RHEA-COMP:11322"/>
        <dbReference type="ChEBI" id="CHEBI:15378"/>
        <dbReference type="ChEBI" id="CHEBI:30616"/>
        <dbReference type="ChEBI" id="CHEBI:43176"/>
        <dbReference type="ChEBI" id="CHEBI:68546"/>
        <dbReference type="ChEBI" id="CHEBI:456216"/>
        <dbReference type="EC" id="2.7.11.23"/>
    </reaction>
    <physiologicalReaction direction="left-to-right" evidence="11">
        <dbReference type="Rhea" id="RHEA:10217"/>
    </physiologicalReaction>
</comment>
<comment type="subunit">
    <text evidence="3 4 7 8">One of the nine subunits forming the core-TFIIH basal transcription factor. Interacts with mcs2 and tfb3.</text>
</comment>
<comment type="subcellular location">
    <subcellularLocation>
        <location evidence="5">Cytoplasm</location>
    </subcellularLocation>
    <subcellularLocation>
        <location evidence="5">Nucleus</location>
    </subcellularLocation>
</comment>
<comment type="similarity">
    <text evidence="10">Belongs to the protein kinase superfamily. CMGC Ser/Thr protein kinase family. CDC2/CDKX subfamily.</text>
</comment>
<sequence>MDIEKSDKWTYVKERKVGEGTYAVVFLGRQKETNRRVAIKKIKVGQFKDGIDISALREIKFLRESRHDNVIELVDVFSTKSNLNIILEFLDSDLEMLIKDKFIVFQPAHIKSWMVMLLRGLHHIHSRFILHRDLKPNNLLISSDGVLKLADFGLSRDFGTPSHMSHQVITRWYRPPELFMGCRSYGTGVDMWSVGCIFAELMLRTPYLPGESDLDQLNVIFRALGTPEPEVIKSMQQLPNYVEMKHIPPPNGGMEALFSAAGHEEIDLLKMMLDYNPYRRPTAQQALEHHYFSALPKPTHPSLLPRKGGEEGIKHVSSDLQRQNNFPMRANIKFV</sequence>
<accession>Q12126</accession>
<gene>
    <name type="primary">crk1</name>
    <name type="synonym">mcs6</name>
    <name type="synonym">mop1</name>
    <name type="ORF">SPBC19F8.07</name>
</gene>
<protein>
    <recommendedName>
        <fullName>Serine/threonine-protein kinase crk1</fullName>
        <ecNumber evidence="7 8 9">2.7.11.23</ecNumber>
    </recommendedName>
    <alternativeName>
        <fullName>Mitotic catastrophe suppressor 6</fullName>
    </alternativeName>
</protein>